<evidence type="ECO:0000250" key="1">
    <source>
        <dbReference type="UniProtKB" id="P01160"/>
    </source>
</evidence>
<evidence type="ECO:0000250" key="2">
    <source>
        <dbReference type="UniProtKB" id="P01161"/>
    </source>
</evidence>
<evidence type="ECO:0000250" key="3">
    <source>
        <dbReference type="UniProtKB" id="P05125"/>
    </source>
</evidence>
<evidence type="ECO:0000256" key="4">
    <source>
        <dbReference type="SAM" id="MobiDB-lite"/>
    </source>
</evidence>
<evidence type="ECO:0000269" key="5">
    <source>
    </source>
</evidence>
<evidence type="ECO:0000269" key="6">
    <source>
    </source>
</evidence>
<evidence type="ECO:0000269" key="7">
    <source>
    </source>
</evidence>
<evidence type="ECO:0000303" key="8">
    <source>
    </source>
</evidence>
<evidence type="ECO:0000305" key="9"/>
<reference key="1">
    <citation type="journal article" date="1990" name="Nucleic Acids Res.">
        <title>Nucleotide sequence of a porcine prepro atrial natriuretic peptide (ANP) cDNA.</title>
        <authorList>
            <person name="Maegert H.-J."/>
            <person name="Appelhans H."/>
            <person name="Gassen H.G."/>
            <person name="Forssmann W.-G."/>
        </authorList>
    </citation>
    <scope>NUCLEOTIDE SEQUENCE [MRNA]</scope>
    <source>
        <tissue>Heart right atrium</tissue>
    </source>
</reference>
<reference key="2">
    <citation type="journal article" date="1984" name="Cell Tissue Res.">
        <title>The auricular myocardiocytes of the heart constitute an endocrine organ. Characterization of a porcine cardiac peptide hormone, cardiodilatin-126.</title>
        <authorList>
            <person name="Forssmann W.-G."/>
            <person name="Birr C."/>
            <person name="Carlquist M."/>
            <person name="Christmann M."/>
            <person name="Finke R."/>
            <person name="Henschen A."/>
            <person name="Hock D."/>
            <person name="Kirchheim H."/>
            <person name="Kreye V."/>
            <person name="Lottspeich F."/>
            <person name="Metz J."/>
            <person name="Mutt V."/>
            <person name="Reinecke M."/>
        </authorList>
    </citation>
    <scope>PROTEIN SEQUENCE OF 25-150</scope>
    <source>
        <tissue>Heart right atrium</tissue>
    </source>
</reference>
<reference key="3">
    <citation type="journal article" date="1983" name="Anat. Embryol. (Berl.)">
        <title>The right auricle of the heart is an endocrine organ. Cardiodilatin as a peptide hormone candidate.</title>
        <authorList>
            <person name="Forssmann W.-G."/>
            <person name="Hock D."/>
            <person name="Lottspeich F."/>
            <person name="Henschen A."/>
            <person name="Kreye V."/>
            <person name="Christmann M."/>
            <person name="Reinecke M."/>
            <person name="Metz J."/>
            <person name="Carlquist M."/>
            <person name="Mutt V."/>
        </authorList>
    </citation>
    <scope>PROTEIN SEQUENCE OF 25-54</scope>
    <source>
        <tissue>Heart right atrium</tissue>
    </source>
</reference>
<reference key="4">
    <citation type="journal article" date="1988" name="Nature">
        <title>A new natriuretic peptide in porcine brain.</title>
        <authorList>
            <person name="Sudoh T."/>
            <person name="Kangawa K."/>
            <person name="Minamino N."/>
            <person name="Matsuo H."/>
        </authorList>
    </citation>
    <scope>FUNCTION (ATRIAL NATRIURETIC PEPTIDE)</scope>
    <scope>TISSUE SPECIFICITY (ATRIAL NATRIURETIC PEPTIDE)</scope>
    <source>
        <tissue evidence="8">Brain</tissue>
    </source>
</reference>
<protein>
    <recommendedName>
        <fullName evidence="9">Natriuretic peptides A</fullName>
    </recommendedName>
    <alternativeName>
        <fullName evidence="1">Atrial natriuretic factor prohormone</fullName>
        <shortName evidence="2">preproANF</shortName>
        <shortName evidence="1">proANF</shortName>
    </alternativeName>
    <alternativeName>
        <fullName evidence="1">Atrial natriuretic peptide prohormone</fullName>
        <shortName evidence="1">preproANP</shortName>
        <shortName evidence="1">proANP</shortName>
    </alternativeName>
    <alternativeName>
        <fullName evidence="2">Atriopeptigen</fullName>
    </alternativeName>
    <alternativeName>
        <fullName evidence="1">Cardiodilatin</fullName>
        <shortName evidence="1">CDD</shortName>
    </alternativeName>
    <alternativeName>
        <fullName evidence="1">preproCDD-ANF</fullName>
    </alternativeName>
    <component>
        <recommendedName>
            <fullName evidence="1">Long-acting natriuretic peptide</fullName>
            <shortName evidence="1">LANP</shortName>
        </recommendedName>
        <alternativeName>
            <fullName evidence="9">Long-acting natriuretic hormone</fullName>
            <shortName evidence="9">LANH</shortName>
        </alternativeName>
        <alternativeName>
            <fullName evidence="1">Pro atrial natriuretic factor 1-30</fullName>
            <shortName evidence="1">proANF 1-30</shortName>
        </alternativeName>
        <alternativeName>
            <fullName evidence="9">Pro atrial natriuretic peptide 1-30</fullName>
            <shortName evidence="9">proANP 1-30</shortName>
        </alternativeName>
    </component>
    <component>
        <recommendedName>
            <fullName evidence="1">Vessel dilator</fullName>
            <shortName evidence="1">VSDL</shortName>
        </recommendedName>
        <alternativeName>
            <fullName evidence="1">Pro atrial natriuretic factor 31-67</fullName>
            <shortName evidence="1">proANF 31-67</shortName>
        </alternativeName>
        <alternativeName>
            <fullName evidence="9">Pro atrial natriuretic peptide 31-67</fullName>
            <shortName evidence="9">proANP 31-67</shortName>
        </alternativeName>
    </component>
    <component>
        <recommendedName>
            <fullName evidence="1">Kaliuretic peptide</fullName>
            <shortName evidence="1">KP</shortName>
        </recommendedName>
        <alternativeName>
            <fullName evidence="1">Pro atrial natriuretic factor 79-98</fullName>
            <shortName evidence="1">proANF 79-98</shortName>
        </alternativeName>
        <alternativeName>
            <fullName evidence="9">Pro atrial natriuretic peptide 79-98</fullName>
            <shortName evidence="9">proANP 79-98</shortName>
        </alternativeName>
    </component>
    <component>
        <recommendedName>
            <fullName evidence="1">Urodilatin</fullName>
            <shortName evidence="1">URO</shortName>
        </recommendedName>
        <alternativeName>
            <fullName evidence="1">CDD 95-126</fullName>
        </alternativeName>
        <alternativeName>
            <fullName evidence="1">CDD-ANP (95-126)</fullName>
        </alternativeName>
        <alternativeName>
            <fullName evidence="1">Pro atrial natriuretic peptide 95-126</fullName>
            <shortName evidence="1">proANP 95-126</shortName>
        </alternativeName>
    </component>
    <component>
        <recommendedName>
            <fullName evidence="9">Auriculin-C</fullName>
        </recommendedName>
        <alternativeName>
            <fullName evidence="2">Atrial natriuretic factor 1-33</fullName>
            <shortName evidence="2">ANF 1-33</shortName>
        </alternativeName>
    </component>
    <component>
        <recommendedName>
            <fullName evidence="9">Auriculin-D</fullName>
        </recommendedName>
        <alternativeName>
            <fullName evidence="2">Atrial natriuretic factor 3-33</fullName>
            <shortName evidence="2">ANF 3-33</shortName>
        </alternativeName>
    </component>
    <component>
        <recommendedName>
            <fullName evidence="1">Atrial natriuretic peptide</fullName>
            <shortName evidence="1">ANP</shortName>
        </recommendedName>
        <alternativeName>
            <fullName evidence="1">Alpha-atrial natriuretic peptide</fullName>
        </alternativeName>
        <alternativeName>
            <fullName evidence="1">Alpha-hANP</fullName>
        </alternativeName>
        <alternativeName>
            <fullName evidence="1">Atrial natriuretic factor</fullName>
            <shortName evidence="1">ANF</shortName>
        </alternativeName>
        <alternativeName>
            <fullName evidence="1">CDD-ANF</fullName>
        </alternativeName>
        <alternativeName>
            <fullName evidence="1">CDD-ANP (99-126)</fullName>
        </alternativeName>
        <alternativeName>
            <fullName evidence="2">Cardionatrin</fullName>
        </alternativeName>
        <alternativeName>
            <fullName evidence="1">Pro atrial natriuretic factor 99-126</fullName>
            <shortName evidence="1">proANF 99-126</shortName>
        </alternativeName>
    </component>
    <component>
        <recommendedName>
            <fullName evidence="9">Auriculin-B</fullName>
        </recommendedName>
        <alternativeName>
            <fullName evidence="2">Atrial natriuretic factor 8-33</fullName>
            <shortName evidence="2">ANF 8-33</shortName>
        </alternativeName>
    </component>
    <component>
        <recommendedName>
            <fullName evidence="2">Auriculin-A</fullName>
        </recommendedName>
    </component>
    <component>
        <recommendedName>
            <fullName evidence="2">Atriopeptin-1</fullName>
        </recommendedName>
        <alternativeName>
            <fullName evidence="2">Atriopeptin I</fullName>
        </alternativeName>
    </component>
    <component>
        <recommendedName>
            <fullName evidence="2">Atriopeptin-2</fullName>
        </recommendedName>
        <alternativeName>
            <fullName evidence="2">Atriopeptin II</fullName>
        </alternativeName>
    </component>
    <component>
        <recommendedName>
            <fullName evidence="2">Atriopeptin-3</fullName>
        </recommendedName>
        <alternativeName>
            <fullName evidence="2">Atriopeptin III</fullName>
        </alternativeName>
    </component>
</protein>
<gene>
    <name type="primary">NPPA</name>
</gene>
<organism>
    <name type="scientific">Sus scrofa</name>
    <name type="common">Pig</name>
    <dbReference type="NCBI Taxonomy" id="9823"/>
    <lineage>
        <taxon>Eukaryota</taxon>
        <taxon>Metazoa</taxon>
        <taxon>Chordata</taxon>
        <taxon>Craniata</taxon>
        <taxon>Vertebrata</taxon>
        <taxon>Euteleostomi</taxon>
        <taxon>Mammalia</taxon>
        <taxon>Eutheria</taxon>
        <taxon>Laurasiatheria</taxon>
        <taxon>Artiodactyla</taxon>
        <taxon>Suina</taxon>
        <taxon>Suidae</taxon>
        <taxon>Sus</taxon>
    </lineage>
</organism>
<feature type="signal peptide" evidence="6 7">
    <location>
        <begin position="1"/>
        <end position="24"/>
    </location>
</feature>
<feature type="chain" id="PRO_0000449744" description="Natriuretic peptides A" evidence="1">
    <location>
        <begin position="25"/>
        <end position="150"/>
    </location>
</feature>
<feature type="propeptide" id="PRO_0000001501" evidence="9">
    <location>
        <begin position="25"/>
        <end position="122"/>
    </location>
</feature>
<feature type="peptide" id="PRO_0000449745" description="Long-acting natriuretic peptide" evidence="1">
    <location>
        <begin position="25"/>
        <end position="54"/>
    </location>
</feature>
<feature type="peptide" id="PRO_0000449746" description="Vessel dilator" evidence="1">
    <location>
        <begin position="55"/>
        <end position="91"/>
    </location>
</feature>
<feature type="propeptide" id="PRO_0000449747" evidence="1">
    <location>
        <begin position="92"/>
        <end position="102"/>
    </location>
</feature>
<feature type="peptide" id="PRO_0000449748" description="Kaliuretic peptide" evidence="1">
    <location>
        <begin position="103"/>
        <end position="122"/>
    </location>
</feature>
<feature type="peptide" id="PRO_0000449749" description="Auriculin-C" evidence="2">
    <location>
        <begin position="118"/>
        <end position="150"/>
    </location>
</feature>
<feature type="peptide" id="PRO_0000449750" description="Urodilatin" evidence="1">
    <location>
        <begin position="119"/>
        <end position="150"/>
    </location>
</feature>
<feature type="peptide" id="PRO_0000449751" description="Auriculin-D" evidence="2">
    <location>
        <begin position="120"/>
        <end position="144"/>
    </location>
</feature>
<feature type="peptide" id="PRO_0000001502" description="Atrial natriuretic peptide" evidence="1">
    <location>
        <begin position="123"/>
        <end position="150"/>
    </location>
</feature>
<feature type="peptide" id="PRO_0000449752" description="Auriculin-B" evidence="2">
    <location>
        <begin position="126"/>
        <end position="150"/>
    </location>
</feature>
<feature type="peptide" id="PRO_0000449753" description="Auriculin-A" evidence="2">
    <location>
        <begin position="126"/>
        <end position="149"/>
    </location>
</feature>
<feature type="peptide" id="PRO_0000449754" description="Atriopeptin-3" evidence="2">
    <location>
        <begin position="127"/>
        <end position="150"/>
    </location>
</feature>
<feature type="peptide" id="PRO_0000449755" description="Atriopeptin-2" evidence="2">
    <location>
        <begin position="127"/>
        <end position="149"/>
    </location>
</feature>
<feature type="peptide" id="PRO_0000449756" description="Atriopeptin-1" evidence="2">
    <location>
        <begin position="127"/>
        <end position="147"/>
    </location>
</feature>
<feature type="region of interest" description="Disordered" evidence="4">
    <location>
        <begin position="77"/>
        <end position="100"/>
    </location>
</feature>
<feature type="site" description="Cleavage; by CORIN" evidence="1">
    <location>
        <begin position="122"/>
        <end position="123"/>
    </location>
</feature>
<feature type="site" description="Cleavage; by MME" evidence="1">
    <location>
        <begin position="129"/>
        <end position="130"/>
    </location>
</feature>
<feature type="modified residue" description="Phosphoserine" evidence="1">
    <location>
        <position position="128"/>
    </location>
</feature>
<feature type="disulfide bond" evidence="1">
    <location>
        <begin position="129"/>
        <end position="145"/>
    </location>
</feature>
<sequence>MSSFTITVSFLLVLVFQFPGQTRANPVYGSVSNADLMDFKNLLDHLEDKMPLEDEAMPPQVLSEQNEEVGAPLSPLLEVPPWTGEVNPAQRDGGALGRGPWDASDRSALLKSKLRALLAAPRSLRRSSCFGGRMDRIGAQSGLGCNSFRY</sequence>
<proteinExistence type="evidence at protein level"/>
<name>ANF_PIG</name>
<comment type="function">
    <molecule>Atrial natriuretic peptide</molecule>
    <text evidence="1 3 5">Hormone that plays a key role in mediating cardio-renal homeostasis, and is involved in vascular remodeling and regulating energy metabolism (By similarity). Acts by specifically binding and stimulating NPR1 to produce cGMP, which in turn activates effector proteins, such as PRKG1, that drive various biological responses (By similarity). Regulates vasodilation, natriuresis, diuresis and aldosterone synthesis and is therefore essential for regulating blood pressure, controlling the extracellular fluid volume and maintaining the fluid-electrolyte balance (PubMed:2964562). Also involved in inhibiting cardiac remodeling and cardiac hypertrophy by inducing cardiomyocyte apoptosis and attenuating the growth of cardiomyocytes and fibroblasts (By similarity). Plays a role in female pregnancy by promoting trophoblast invasion and spiral artery remodeling in uterus, and thus prevents pregnancy-induced hypertension (By similarity). In adipose tissue, acts in various cGMP- and PKG-dependent pathways to regulate lipid metabolism and energy homeostasis (By similarity). This includes up-regulating lipid metabolism and mitochondrial oxygen utilization by activating the AMP-activated protein kinase (AMPK), and increasing energy expenditure by acting via MAPK11 to promote the UCP1-dependent thermogenesis of brown adipose tissue (By similarity). Binds the clearance receptor NPR3 which removes the hormone from circulation (By similarity).</text>
</comment>
<comment type="function">
    <molecule>Long-acting natriuretic peptide</molecule>
    <text evidence="1 2">May have a role in cardio-renal homeostasis through regulation of natriuresis, diuresis, vasodilation, and inhibiting aldosterone synthesis. In vitro, promotes the production of cGMP and induces vasodilation. May promote natriuresis, at least in part, by enhancing prostaglandin E2 synthesis resulting in the inhibition of renal Na+-K+-ATPase (By similarity). However reports on the involvement of this peptide in mammal blood volume and blood pressure homeostasis are conflicting; according to a report, in vivo it is not sufficient to activate cGMP and does not inhibit collecting duct transport nor effect diuresis and natriuresis (By similarity). Appears to bind to specific receptors that are distinct from the receptors bound by atrial natriuretic peptide and vessel dilator. Possibly enhances protein excretion in urine by decreasing proximal tubular protein reabsorption (By similarity).</text>
</comment>
<comment type="function">
    <molecule>Vessel dilator</molecule>
    <text evidence="1">May have a role in cardio-renal homeostasis through regulation of natriuresis, diuresis, and vasodilation. In vitro, promotes the production of cGMP and induces vasodilation. May promote natriuresis, at least in part, by enhancing prostaglandin E2 synthesis resulting in the inhibition of renal Na+-K+-ATPase. However reports on the involvement of this peptide in mammal blood volume and blood pressure homeostasis are conflicting; according to a report it is not sufficient to activate cGMP and does not inhibit collecting duct transport nor effect diuresis and natriuresis. Appears to bind to specific receptors that are distinct from the receptors bound by the atrial natriuretic and long-acting natriuretic peptides. Possibly functions in protein excretion in urine by maintaining the integrity of the proximal tubules and enhancing protein excretion by decreasing proximal tubular protein reabsorption.</text>
</comment>
<comment type="function">
    <molecule>Kaliuretic peptide</molecule>
    <text evidence="1">May have a role in cardio-renal homeostasis through regulation of diuresis and inhibiting aldosterone synthesis. In vitro, promotes the production of cGMP and induces vasodilation. May promote natriuresis, at least in part, by enhancing prostaglandin E2 synthesis resulting in the inhibition of renal Na+-K+-ATPase. May have a role in potassium excretion but not sodium excretion (natriuresis). Possibly enhances protein excretion in urine by decreasing proximal tubular protein reabsorption.</text>
</comment>
<comment type="function">
    <molecule>Urodilatin</molecule>
    <text evidence="1">Hormone produced in the kidneys that appears to be important for maintaining cardio-renal homeostasis. Mediates vasodilation, natriuresis and diuresis primarily in the renal system, in order to maintain the extracellular fluid volume and control the fluid-electrolyte balance. Specifically binds and stimulates cGMP production by renal transmembrane receptors, likely NPR1. Urodilatin not ANP, may be the natriuretic peptide responsible for the regulation of sodium and water homeostasis in the kidney.</text>
</comment>
<comment type="function">
    <molecule>Auriculin-D</molecule>
    <text evidence="2">May have a role in cardio-renal homeostasis through regulation of natriuresis and vasodilation. In vivo promotes natriuresis and in vitro, vasodilates renal artery strips.</text>
</comment>
<comment type="function">
    <molecule>Auriculin-B</molecule>
    <text evidence="2">May have a role in cardio-renal homeostasis through regulation of natriuresis and vasodilation. In vivo promotes natriuresis and in vitro, vasodilates renal artery strips.</text>
</comment>
<comment type="function">
    <molecule>Auriculin-A</molecule>
    <text evidence="2">May have a role in cardio-renal homeostasis through regulation of regulation of natriuresis and vasodilation. In vivo promotes natriuresis. In vitro, vasodilates intestinal smooth muscle but not smooth muscle strips.</text>
</comment>
<comment type="function">
    <molecule>Atriopeptin-2</molecule>
    <text evidence="2">May have a role in cardio-renal homeostasis through regulation of natriuresis and vasodilation. In vivo promotes natriuresis. In vitro, selectively vasodilates intestinal and vascular smooth muscle strips.</text>
</comment>
<comment type="function">
    <molecule>Atriopeptin-1</molecule>
    <text evidence="2">May have a role in cardio-renal homeostasis through regulation of natriuresis and vasodilation. In vivo promotes natriuresis. In vitro, selectively vasodilates intestinal smooth muscle but not vascular smooth muscle strips.</text>
</comment>
<comment type="subunit">
    <molecule>Atrial natriuretic peptide</molecule>
    <text evidence="1">Homodimer; disulfide-linked antiparallel dimer.</text>
</comment>
<comment type="subcellular location">
    <molecule>Long-acting natriuretic peptide</molecule>
    <subcellularLocation>
        <location evidence="1">Secreted</location>
    </subcellularLocation>
    <text evidence="1">Detected in blood.</text>
</comment>
<comment type="subcellular location">
    <molecule>Vessel dilator</molecule>
    <subcellularLocation>
        <location evidence="1">Secreted</location>
    </subcellularLocation>
    <text evidence="1">Detected in blood.</text>
</comment>
<comment type="subcellular location">
    <molecule>Kaliuretic peptide</molecule>
    <subcellularLocation>
        <location evidence="1">Secreted</location>
    </subcellularLocation>
    <text evidence="1">Detected in blood.</text>
</comment>
<comment type="subcellular location">
    <molecule>Urodilatin</molecule>
    <subcellularLocation>
        <location evidence="1">Secreted</location>
    </subcellularLocation>
    <text evidence="1">Detected in urine. Not detected in blood. Increased electrolytes, osmolality and intracellular cAMP levels increase peptide secretion/excretion.</text>
</comment>
<comment type="subcellular location">
    <molecule>Atrial natriuretic peptide</molecule>
    <subcellularLocation>
        <location evidence="1">Secreted</location>
    </subcellularLocation>
    <subcellularLocation>
        <location evidence="1">Perikaryon</location>
    </subcellularLocation>
    <subcellularLocation>
        <location evidence="1">Cell projection</location>
    </subcellularLocation>
    <text evidence="1 2">Detected in blood. Detected in urine in one study. However, in another study, was not detected in urine. Detected in cytoplasmic bodies and neuronal processes of pyramidal neurons (layers II-VI) (By similarity). Increased secretion in response to the vasopressin AVP (By similarity). Likely to be secreted in response to an increase in atrial pressure or atrial stretch. In kidney cells, secretion increases in response to activated guanylyl cyclases and increased intracellular cAMP levels. Plasma levels increase 15 minutes after a high-salt meal, and decrease back to normal plasma levels 1 hr later (By similarity).</text>
</comment>
<comment type="subcellular location">
    <molecule>Atriopeptin-3</molecule>
    <subcellularLocation>
        <location evidence="2">Secreted</location>
    </subcellularLocation>
    <text evidence="2">Detected in blood. Slight increase in secretion in response to the vasopressin AVP.</text>
</comment>
<comment type="tissue specificity">
    <molecule>Atrial natriuretic peptide</molecule>
    <text evidence="5">Brain (at protein level).</text>
</comment>
<comment type="PTM">
    <text evidence="1 2">The precursor molecule is proteolytically cleaved by CORIN at Arg-122 to produce the atrial natriuretic peptide (By similarity). Undergoes further proteolytic cleavage by unknown proteases to give rise to long-acting natriuretic peptide, vessel dilator and kaliuretic peptide (By similarity). Additional processing gives rise to the auriculin and atriopeptin peptides (By similarity). In the kidneys, alternative processing by an unknown protease results in the peptide urodilatin (By similarity).</text>
</comment>
<comment type="PTM">
    <molecule>Atrial natriuretic peptide</molecule>
    <text evidence="1">Cleavage by MME initiates degradation of the factor and thereby regulates its activity. Degradation by IDE results in reduced activation of NPR1 (in vitro). During IDE degradation, the resulting products can temporarily stimulate NPR2 to produce cGMP, before the fragments are completely degraded and inactivated by IDE (in vitro).</text>
</comment>
<comment type="PTM">
    <molecule>Urodilatin</molecule>
    <text evidence="1">Degraded by IDE.</text>
</comment>
<comment type="PTM">
    <molecule>Urodilatin</molecule>
    <text evidence="1">Phosphorylation on Ser-128 decreases vasorelaxant activity.</text>
</comment>
<comment type="similarity">
    <text evidence="9">Belongs to the natriuretic peptide family.</text>
</comment>
<comment type="caution">
    <molecule>Long-acting natriuretic peptide</molecule>
    <text evidence="1 2">Results concerning the involvement of this peptide in blood volume and blood pressure homeostasis are conflicting. Several studies utilising in vitro and heterologous expression systems show that it is able to activate cGMP and promote vasodilation and natriuresis (By similarity). However, an in vivo study in rat found that it is not sufficient to induce any diuretic, natriuretic, nor hypotensive responses, and is unable to bind NPR1 nor increase guanylyl cyclase activity (By similarity).</text>
</comment>
<comment type="caution">
    <molecule>Vessel dilator</molecule>
    <text evidence="1 2">Results concerning the involvement of this peptide in blood volume and blood pressure homeostasis are conflicting. Several studies utilising in vitro and heterologous expression systems show that it is able to activate cGMP and promote vasodilation and natriuresis (By similarity). However, a heterologous and in vivo expression study in rat found that it is not sufficient to induce any diuretic, natriuretic, nor hypotensive responses, and is unable to bind NPR1 nor increase guanylyl cyclase activity (By similarity).</text>
</comment>
<dbReference type="EMBL" id="X54669">
    <property type="protein sequence ID" value="CAA38480.1"/>
    <property type="molecule type" value="mRNA"/>
</dbReference>
<dbReference type="PIR" id="S13107">
    <property type="entry name" value="S13107"/>
</dbReference>
<dbReference type="RefSeq" id="NP_999425.1">
    <property type="nucleotide sequence ID" value="NM_214260.2"/>
</dbReference>
<dbReference type="FunCoup" id="P24259">
    <property type="interactions" value="813"/>
</dbReference>
<dbReference type="STRING" id="9823.ENSSSCP00000003721"/>
<dbReference type="BindingDB" id="P24259"/>
<dbReference type="PaxDb" id="9823-ENSSSCP00000003721"/>
<dbReference type="GeneID" id="397496"/>
<dbReference type="KEGG" id="ssc:397496"/>
<dbReference type="CTD" id="4878"/>
<dbReference type="eggNOG" id="ENOG502S9RQ">
    <property type="taxonomic scope" value="Eukaryota"/>
</dbReference>
<dbReference type="InParanoid" id="P24259"/>
<dbReference type="OrthoDB" id="8865096at2759"/>
<dbReference type="Proteomes" id="UP000008227">
    <property type="component" value="Unplaced"/>
</dbReference>
<dbReference type="Proteomes" id="UP000314985">
    <property type="component" value="Unplaced"/>
</dbReference>
<dbReference type="Proteomes" id="UP000694570">
    <property type="component" value="Unplaced"/>
</dbReference>
<dbReference type="Proteomes" id="UP000694571">
    <property type="component" value="Unplaced"/>
</dbReference>
<dbReference type="Proteomes" id="UP000694720">
    <property type="component" value="Unplaced"/>
</dbReference>
<dbReference type="Proteomes" id="UP000694722">
    <property type="component" value="Unplaced"/>
</dbReference>
<dbReference type="Proteomes" id="UP000694723">
    <property type="component" value="Unplaced"/>
</dbReference>
<dbReference type="Proteomes" id="UP000694724">
    <property type="component" value="Unplaced"/>
</dbReference>
<dbReference type="Proteomes" id="UP000694725">
    <property type="component" value="Unplaced"/>
</dbReference>
<dbReference type="Proteomes" id="UP000694726">
    <property type="component" value="Unplaced"/>
</dbReference>
<dbReference type="Proteomes" id="UP000694727">
    <property type="component" value="Unplaced"/>
</dbReference>
<dbReference type="Proteomes" id="UP000694728">
    <property type="component" value="Unplaced"/>
</dbReference>
<dbReference type="GO" id="GO:0042995">
    <property type="term" value="C:cell projection"/>
    <property type="evidence" value="ECO:0007669"/>
    <property type="project" value="UniProtKB-SubCell"/>
</dbReference>
<dbReference type="GO" id="GO:0005737">
    <property type="term" value="C:cytoplasm"/>
    <property type="evidence" value="ECO:0000318"/>
    <property type="project" value="GO_Central"/>
</dbReference>
<dbReference type="GO" id="GO:0005615">
    <property type="term" value="C:extracellular space"/>
    <property type="evidence" value="ECO:0000318"/>
    <property type="project" value="GO_Central"/>
</dbReference>
<dbReference type="GO" id="GO:0043204">
    <property type="term" value="C:perikaryon"/>
    <property type="evidence" value="ECO:0007669"/>
    <property type="project" value="UniProtKB-SubCell"/>
</dbReference>
<dbReference type="GO" id="GO:0005179">
    <property type="term" value="F:hormone activity"/>
    <property type="evidence" value="ECO:0000318"/>
    <property type="project" value="GO_Central"/>
</dbReference>
<dbReference type="GO" id="GO:0051427">
    <property type="term" value="F:hormone receptor binding"/>
    <property type="evidence" value="ECO:0000318"/>
    <property type="project" value="GO_Central"/>
</dbReference>
<dbReference type="GO" id="GO:0006182">
    <property type="term" value="P:cGMP biosynthetic process"/>
    <property type="evidence" value="ECO:0000250"/>
    <property type="project" value="UniProtKB"/>
</dbReference>
<dbReference type="GO" id="GO:0019934">
    <property type="term" value="P:cGMP-mediated signaling"/>
    <property type="evidence" value="ECO:0000318"/>
    <property type="project" value="GO_Central"/>
</dbReference>
<dbReference type="GO" id="GO:0007565">
    <property type="term" value="P:female pregnancy"/>
    <property type="evidence" value="ECO:0000250"/>
    <property type="project" value="UniProtKB"/>
</dbReference>
<dbReference type="GO" id="GO:0003085">
    <property type="term" value="P:negative regulation of systemic arterial blood pressure"/>
    <property type="evidence" value="ECO:0000318"/>
    <property type="project" value="GO_Central"/>
</dbReference>
<dbReference type="GO" id="GO:0007218">
    <property type="term" value="P:neuropeptide signaling pathway"/>
    <property type="evidence" value="ECO:0000318"/>
    <property type="project" value="GO_Central"/>
</dbReference>
<dbReference type="GO" id="GO:0007168">
    <property type="term" value="P:receptor guanylyl cyclase signaling pathway"/>
    <property type="evidence" value="ECO:0000250"/>
    <property type="project" value="UniProtKB"/>
</dbReference>
<dbReference type="GO" id="GO:0008217">
    <property type="term" value="P:regulation of blood pressure"/>
    <property type="evidence" value="ECO:0000250"/>
    <property type="project" value="UniProtKB"/>
</dbReference>
<dbReference type="GO" id="GO:0042311">
    <property type="term" value="P:vasodilation"/>
    <property type="evidence" value="ECO:0007669"/>
    <property type="project" value="UniProtKB-KW"/>
</dbReference>
<dbReference type="InterPro" id="IPR000663">
    <property type="entry name" value="Natr_peptide"/>
</dbReference>
<dbReference type="InterPro" id="IPR030480">
    <property type="entry name" value="Natr_peptide_CS"/>
</dbReference>
<dbReference type="InterPro" id="IPR050787">
    <property type="entry name" value="Natriuretic_peptide"/>
</dbReference>
<dbReference type="InterPro" id="IPR002407">
    <property type="entry name" value="Natriuretic_peptide_atrial"/>
</dbReference>
<dbReference type="PANTHER" id="PTHR14066">
    <property type="entry name" value="ATRIAL NATRIURETIC FACTOR PRECURSOR"/>
    <property type="match status" value="1"/>
</dbReference>
<dbReference type="PANTHER" id="PTHR14066:SF2">
    <property type="entry name" value="NATRIURETIC PEPTIDES A"/>
    <property type="match status" value="1"/>
</dbReference>
<dbReference type="Pfam" id="PF00212">
    <property type="entry name" value="ANP"/>
    <property type="match status" value="1"/>
</dbReference>
<dbReference type="PRINTS" id="PR00711">
    <property type="entry name" value="ANATPEPTIDE"/>
</dbReference>
<dbReference type="PRINTS" id="PR00710">
    <property type="entry name" value="NATPEPTIDES"/>
</dbReference>
<dbReference type="SMART" id="SM00183">
    <property type="entry name" value="NAT_PEP"/>
    <property type="match status" value="1"/>
</dbReference>
<dbReference type="PROSITE" id="PS00263">
    <property type="entry name" value="NATRIURETIC_PEPTIDE"/>
    <property type="match status" value="1"/>
</dbReference>
<keyword id="KW-0966">Cell projection</keyword>
<keyword id="KW-0903">Direct protein sequencing</keyword>
<keyword id="KW-1015">Disulfide bond</keyword>
<keyword id="KW-0372">Hormone</keyword>
<keyword id="KW-0597">Phosphoprotein</keyword>
<keyword id="KW-1185">Reference proteome</keyword>
<keyword id="KW-0964">Secreted</keyword>
<keyword id="KW-0732">Signal</keyword>
<keyword id="KW-0838">Vasoactive</keyword>
<keyword id="KW-0840">Vasodilator</keyword>
<accession>P24259</accession>